<name>COQ7_LEGPH</name>
<comment type="function">
    <text evidence="1">Catalyzes the hydroxylation of 2-nonaprenyl-3-methyl-6-methoxy-1,4-benzoquinol during ubiquinone biosynthesis.</text>
</comment>
<comment type="catalytic activity">
    <reaction evidence="1">
        <text>a 5-methoxy-2-methyl-3-(all-trans-polyprenyl)benzene-1,4-diol + AH2 + O2 = a 3-demethylubiquinol + A + H2O</text>
        <dbReference type="Rhea" id="RHEA:50908"/>
        <dbReference type="Rhea" id="RHEA-COMP:10859"/>
        <dbReference type="Rhea" id="RHEA-COMP:10914"/>
        <dbReference type="ChEBI" id="CHEBI:13193"/>
        <dbReference type="ChEBI" id="CHEBI:15377"/>
        <dbReference type="ChEBI" id="CHEBI:15379"/>
        <dbReference type="ChEBI" id="CHEBI:17499"/>
        <dbReference type="ChEBI" id="CHEBI:84167"/>
        <dbReference type="ChEBI" id="CHEBI:84422"/>
        <dbReference type="EC" id="1.14.99.60"/>
    </reaction>
</comment>
<comment type="cofactor">
    <cofactor evidence="1">
        <name>Fe cation</name>
        <dbReference type="ChEBI" id="CHEBI:24875"/>
    </cofactor>
    <text evidence="1">Binds 2 iron ions per subunit.</text>
</comment>
<comment type="pathway">
    <text evidence="1">Cofactor biosynthesis; ubiquinone biosynthesis.</text>
</comment>
<comment type="subcellular location">
    <subcellularLocation>
        <location evidence="1">Cell membrane</location>
        <topology evidence="1">Peripheral membrane protein</topology>
    </subcellularLocation>
</comment>
<comment type="similarity">
    <text evidence="1">Belongs to the COQ7 family.</text>
</comment>
<comment type="sequence caution" evidence="2">
    <conflict type="erroneous initiation">
        <sequence resource="EMBL-CDS" id="AAU26136"/>
    </conflict>
</comment>
<keyword id="KW-1003">Cell membrane</keyword>
<keyword id="KW-0408">Iron</keyword>
<keyword id="KW-0472">Membrane</keyword>
<keyword id="KW-0479">Metal-binding</keyword>
<keyword id="KW-0503">Monooxygenase</keyword>
<keyword id="KW-0560">Oxidoreductase</keyword>
<keyword id="KW-1185">Reference proteome</keyword>
<keyword id="KW-0831">Ubiquinone biosynthesis</keyword>
<sequence>MRTSSFLDRLIGEVDSALRTLVLPQKRITTRQSPAENLADTVLSAQEKKHISGLMRVNHAGEVCAQALYQGQALTARLTHIKEQMASAAAEEVDHLAWCEERLYELGSKPSLLNPIWYCGSVLLGALAGLAGDKVSLGFVAETERQVTAHLQRHLHYLPEKDKKTIAILKRMQEDEEHHAHTAMEAGAVELPYIIKQLMNAVSKLMTQSSYYI</sequence>
<reference key="1">
    <citation type="journal article" date="2004" name="Science">
        <title>The genomic sequence of the accidental pathogen Legionella pneumophila.</title>
        <authorList>
            <person name="Chien M."/>
            <person name="Morozova I."/>
            <person name="Shi S."/>
            <person name="Sheng H."/>
            <person name="Chen J."/>
            <person name="Gomez S.M."/>
            <person name="Asamani G."/>
            <person name="Hill K."/>
            <person name="Nuara J."/>
            <person name="Feder M."/>
            <person name="Rineer J."/>
            <person name="Greenberg J.J."/>
            <person name="Steshenko V."/>
            <person name="Park S.H."/>
            <person name="Zhao B."/>
            <person name="Teplitskaya E."/>
            <person name="Edwards J.R."/>
            <person name="Pampou S."/>
            <person name="Georghiou A."/>
            <person name="Chou I.-C."/>
            <person name="Iannuccilli W."/>
            <person name="Ulz M.E."/>
            <person name="Kim D.H."/>
            <person name="Geringer-Sameth A."/>
            <person name="Goldsberry C."/>
            <person name="Morozov P."/>
            <person name="Fischer S.G."/>
            <person name="Segal G."/>
            <person name="Qu X."/>
            <person name="Rzhetsky A."/>
            <person name="Zhang P."/>
            <person name="Cayanis E."/>
            <person name="De Jong P.J."/>
            <person name="Ju J."/>
            <person name="Kalachikov S."/>
            <person name="Shuman H.A."/>
            <person name="Russo J.J."/>
        </authorList>
    </citation>
    <scope>NUCLEOTIDE SEQUENCE [LARGE SCALE GENOMIC DNA]</scope>
    <source>
        <strain>Philadelphia 1 / ATCC 33152 / DSM 7513</strain>
    </source>
</reference>
<organism>
    <name type="scientific">Legionella pneumophila subsp. pneumophila (strain Philadelphia 1 / ATCC 33152 / DSM 7513)</name>
    <dbReference type="NCBI Taxonomy" id="272624"/>
    <lineage>
        <taxon>Bacteria</taxon>
        <taxon>Pseudomonadati</taxon>
        <taxon>Pseudomonadota</taxon>
        <taxon>Gammaproteobacteria</taxon>
        <taxon>Legionellales</taxon>
        <taxon>Legionellaceae</taxon>
        <taxon>Legionella</taxon>
    </lineage>
</organism>
<gene>
    <name evidence="1" type="primary">coq7</name>
    <name type="ordered locus">lpg0028</name>
</gene>
<accession>Q5ZZI2</accession>
<protein>
    <recommendedName>
        <fullName evidence="1">3-demethoxyubiquinol 3-hydroxylase</fullName>
        <shortName evidence="1">DMQ hydroxylase</shortName>
        <ecNumber evidence="1">1.14.99.60</ecNumber>
    </recommendedName>
    <alternativeName>
        <fullName evidence="1">2-nonaprenyl-3-methyl-6-methoxy-1,4-benzoquinol hydroxylase</fullName>
    </alternativeName>
</protein>
<evidence type="ECO:0000255" key="1">
    <source>
        <dbReference type="HAMAP-Rule" id="MF_01658"/>
    </source>
</evidence>
<evidence type="ECO:0000305" key="2"/>
<dbReference type="EC" id="1.14.99.60" evidence="1"/>
<dbReference type="EMBL" id="AE017354">
    <property type="protein sequence ID" value="AAU26136.1"/>
    <property type="status" value="ALT_INIT"/>
    <property type="molecule type" value="Genomic_DNA"/>
</dbReference>
<dbReference type="RefSeq" id="WP_011214319.1">
    <property type="nucleotide sequence ID" value="NC_002942.5"/>
</dbReference>
<dbReference type="RefSeq" id="YP_094083.1">
    <property type="nucleotide sequence ID" value="NC_002942.5"/>
</dbReference>
<dbReference type="SMR" id="Q5ZZI2"/>
<dbReference type="STRING" id="272624.lpg0028"/>
<dbReference type="PaxDb" id="272624-lpg0028"/>
<dbReference type="GeneID" id="57034034"/>
<dbReference type="KEGG" id="lpn:lpg0028"/>
<dbReference type="PATRIC" id="fig|272624.6.peg.30"/>
<dbReference type="eggNOG" id="COG2941">
    <property type="taxonomic scope" value="Bacteria"/>
</dbReference>
<dbReference type="HOGENOM" id="CLU_088601_0_0_6"/>
<dbReference type="OrthoDB" id="5192789at2"/>
<dbReference type="UniPathway" id="UPA00232"/>
<dbReference type="Proteomes" id="UP000000609">
    <property type="component" value="Chromosome"/>
</dbReference>
<dbReference type="GO" id="GO:0005886">
    <property type="term" value="C:plasma membrane"/>
    <property type="evidence" value="ECO:0007669"/>
    <property type="project" value="UniProtKB-SubCell"/>
</dbReference>
<dbReference type="GO" id="GO:0008682">
    <property type="term" value="F:3-demethoxyubiquinol 3-hydroxylase activity"/>
    <property type="evidence" value="ECO:0007669"/>
    <property type="project" value="UniProtKB-EC"/>
</dbReference>
<dbReference type="GO" id="GO:0046872">
    <property type="term" value="F:metal ion binding"/>
    <property type="evidence" value="ECO:0007669"/>
    <property type="project" value="UniProtKB-KW"/>
</dbReference>
<dbReference type="GO" id="GO:0006744">
    <property type="term" value="P:ubiquinone biosynthetic process"/>
    <property type="evidence" value="ECO:0007669"/>
    <property type="project" value="UniProtKB-UniRule"/>
</dbReference>
<dbReference type="CDD" id="cd01042">
    <property type="entry name" value="DMQH"/>
    <property type="match status" value="1"/>
</dbReference>
<dbReference type="Gene3D" id="1.20.1260.10">
    <property type="match status" value="1"/>
</dbReference>
<dbReference type="HAMAP" id="MF_01658">
    <property type="entry name" value="COQ7"/>
    <property type="match status" value="1"/>
</dbReference>
<dbReference type="InterPro" id="IPR047809">
    <property type="entry name" value="COQ7_proteobact"/>
</dbReference>
<dbReference type="InterPro" id="IPR012347">
    <property type="entry name" value="Ferritin-like"/>
</dbReference>
<dbReference type="InterPro" id="IPR009078">
    <property type="entry name" value="Ferritin-like_SF"/>
</dbReference>
<dbReference type="InterPro" id="IPR011566">
    <property type="entry name" value="Ubq_synth_Coq7"/>
</dbReference>
<dbReference type="NCBIfam" id="NF033656">
    <property type="entry name" value="DMQ_monoox_COQ7"/>
    <property type="match status" value="1"/>
</dbReference>
<dbReference type="PANTHER" id="PTHR11237:SF4">
    <property type="entry name" value="5-DEMETHOXYUBIQUINONE HYDROXYLASE, MITOCHONDRIAL"/>
    <property type="match status" value="1"/>
</dbReference>
<dbReference type="PANTHER" id="PTHR11237">
    <property type="entry name" value="COENZYME Q10 BIOSYNTHESIS PROTEIN 7"/>
    <property type="match status" value="1"/>
</dbReference>
<dbReference type="Pfam" id="PF03232">
    <property type="entry name" value="COQ7"/>
    <property type="match status" value="1"/>
</dbReference>
<dbReference type="SUPFAM" id="SSF47240">
    <property type="entry name" value="Ferritin-like"/>
    <property type="match status" value="1"/>
</dbReference>
<proteinExistence type="inferred from homology"/>
<feature type="chain" id="PRO_0000338697" description="3-demethoxyubiquinol 3-hydroxylase">
    <location>
        <begin position="1"/>
        <end position="213"/>
    </location>
</feature>
<feature type="binding site" evidence="1">
    <location>
        <position position="62"/>
    </location>
    <ligand>
        <name>Fe cation</name>
        <dbReference type="ChEBI" id="CHEBI:24875"/>
        <label>1</label>
    </ligand>
</feature>
<feature type="binding site" evidence="1">
    <location>
        <position position="92"/>
    </location>
    <ligand>
        <name>Fe cation</name>
        <dbReference type="ChEBI" id="CHEBI:24875"/>
        <label>1</label>
    </ligand>
</feature>
<feature type="binding site" evidence="1">
    <location>
        <position position="92"/>
    </location>
    <ligand>
        <name>Fe cation</name>
        <dbReference type="ChEBI" id="CHEBI:24875"/>
        <label>2</label>
    </ligand>
</feature>
<feature type="binding site" evidence="1">
    <location>
        <position position="95"/>
    </location>
    <ligand>
        <name>Fe cation</name>
        <dbReference type="ChEBI" id="CHEBI:24875"/>
        <label>1</label>
    </ligand>
</feature>
<feature type="binding site" evidence="1">
    <location>
        <position position="144"/>
    </location>
    <ligand>
        <name>Fe cation</name>
        <dbReference type="ChEBI" id="CHEBI:24875"/>
        <label>2</label>
    </ligand>
</feature>
<feature type="binding site" evidence="1">
    <location>
        <position position="176"/>
    </location>
    <ligand>
        <name>Fe cation</name>
        <dbReference type="ChEBI" id="CHEBI:24875"/>
        <label>1</label>
    </ligand>
</feature>
<feature type="binding site" evidence="1">
    <location>
        <position position="176"/>
    </location>
    <ligand>
        <name>Fe cation</name>
        <dbReference type="ChEBI" id="CHEBI:24875"/>
        <label>2</label>
    </ligand>
</feature>
<feature type="binding site" evidence="1">
    <location>
        <position position="179"/>
    </location>
    <ligand>
        <name>Fe cation</name>
        <dbReference type="ChEBI" id="CHEBI:24875"/>
        <label>2</label>
    </ligand>
</feature>